<comment type="function">
    <text>Tubulin is the major constituent of microtubules, a cylinder consisting of laterally associated linear protofilaments composed of alpha- and beta-tubulin heterodimers. Microtubules grow by the addition of GTP-tubulin dimers to the microtubule end, where a stabilizing cap forms. Below the cap, tubulin dimers are in GDP-bound state, owing to GTPase activity of alpha-tubulin.</text>
</comment>
<comment type="catalytic activity">
    <reaction evidence="2">
        <text>GTP + H2O = GDP + phosphate + H(+)</text>
        <dbReference type="Rhea" id="RHEA:19669"/>
        <dbReference type="ChEBI" id="CHEBI:15377"/>
        <dbReference type="ChEBI" id="CHEBI:15378"/>
        <dbReference type="ChEBI" id="CHEBI:37565"/>
        <dbReference type="ChEBI" id="CHEBI:43474"/>
        <dbReference type="ChEBI" id="CHEBI:58189"/>
    </reaction>
    <physiologicalReaction direction="left-to-right" evidence="2">
        <dbReference type="Rhea" id="RHEA:19670"/>
    </physiologicalReaction>
</comment>
<comment type="cofactor">
    <cofactor evidence="2">
        <name>Mg(2+)</name>
        <dbReference type="ChEBI" id="CHEBI:18420"/>
    </cofactor>
</comment>
<comment type="subunit">
    <text>Dimer of alpha and beta chains. A typical microtubule is a hollow water-filled tube with an outer diameter of 25 nm and an inner diameter of 15 nM. Alpha-beta heterodimers associate head-to-tail to form protofilaments running lengthwise along the microtubule wall with the beta-tubulin subunit facing the microtubule plus end conferring a structural polarity. Microtubules usually have 13 protofilaments but different protofilament numbers can be found in some organisms and specialized cells.</text>
</comment>
<comment type="subcellular location">
    <subcellularLocation>
        <location>Cytoplasm</location>
        <location>Cytoskeleton</location>
    </subcellularLocation>
</comment>
<comment type="PTM">
    <text evidence="1">Undergoes a tyrosination/detyrosination cycle, the cyclic removal and re-addition of a C-terminal tyrosine residue by the enzymes tubulin tyrosine carboxypeptidase (TTCP) and tubulin tyrosine ligase (TTL), respectively.</text>
</comment>
<comment type="PTM">
    <text evidence="1">Acetylation of alpha chains at Lys-40 stabilizes microtubules and affects affinity and processivity of microtubule motors. This modification has a role in multiple cellular functions, ranging from cell motility, cell cycle progression or cell differentiation to intracellular trafficking and signaling (By similarity).</text>
</comment>
<comment type="similarity">
    <text evidence="3">Belongs to the tubulin family.</text>
</comment>
<sequence>MREVISIHVGQAGIQIGNACWELFCLEHGIQPDGQMPSDKTIGGGDDAFNTFFSETGAGKHVPRCVFLDLEPTVVDEVRTGTYRHLFHPEQLISGKEDAANNFARGHYTIGKEIVDLSLDRIRKLADNCTGLQGFLMFNAVGGGTGSGLGCLLLERLSVDYGKKSKLNFCSWPSPQVSTAVVEPYNSVLSTHSLLEHTDVAVMLDNEAIYDICRRNLDIERPTYTNLNRLIAQVISSLTASLRFDGALNVDVTEFQTNLVPYPRIHFMLSSYAPIISAEKAYHEQLSVAEITNSAFEPASMMAKCDPRHGKYMACCLMYRGDVVPKDVNAAVATIKTKRTIQFVDWCPTGFKCGINYQPPTVVPGGDLAKVMRAVCMISNSTAIAEVFSRMDHKFDLMYAKRAFVHWYVGEGMEEGEFSEAREDLAALEKDYEEVGIETAEGEGEEEGYGDEY</sequence>
<reference key="1">
    <citation type="journal article" date="1988" name="Mol. Biochem. Parasitol.">
        <title>The alpha- and beta-tubulins of Toxoplasma gondii are encoded by single copy genes containing multiple introns.</title>
        <authorList>
            <person name="Nagel S.D."/>
            <person name="Boothroyd J.C."/>
        </authorList>
    </citation>
    <scope>NUCLEOTIDE SEQUENCE [GENOMIC DNA]</scope>
</reference>
<accession>P10873</accession>
<evidence type="ECO:0000250" key="1"/>
<evidence type="ECO:0000250" key="2">
    <source>
        <dbReference type="UniProtKB" id="P68363"/>
    </source>
</evidence>
<evidence type="ECO:0000305" key="3"/>
<name>TBA_TOXGO</name>
<dbReference type="EC" id="3.6.5.-" evidence="2"/>
<dbReference type="EMBL" id="M20024">
    <property type="protein sequence ID" value="AAA30145.1"/>
    <property type="molecule type" value="Genomic_DNA"/>
</dbReference>
<dbReference type="PIR" id="S16339">
    <property type="entry name" value="S16339"/>
</dbReference>
<dbReference type="PDB" id="7MIZ">
    <property type="method" value="EM"/>
    <property type="resolution" value="3.40 A"/>
    <property type="chains" value="A0/A2/A4/A6/A8/B0/B2/B4/B6/B8/C0/C2/C4/C6/C8/D0/D2/D4/D6/D8/E0/E2/E4/E6/E8/F0=1-453"/>
</dbReference>
<dbReference type="PDB" id="7TNQ">
    <property type="method" value="EM"/>
    <property type="resolution" value="8.40 A"/>
    <property type="chains" value="A0/A2/A4/A6/A8/B0/B2/B4/B6/B8/C0/C2/C4/C6/C8/D0/D2/D4/D6/D8/E0/E2/E4/E6/E8/F0=1-453"/>
</dbReference>
<dbReference type="PDB" id="7TNS">
    <property type="method" value="EM"/>
    <property type="resolution" value="6.70 A"/>
    <property type="chains" value="A0/A2/A4/A6/A8/B0/B2/B4/B6/B8/C0/C2/C4/C6/C8/D0/D2/D4/D6/D8/E0/E2/E4/E6/E8/F0=1-453"/>
</dbReference>
<dbReference type="PDB" id="7TNT">
    <property type="method" value="EM"/>
    <property type="resolution" value="9.30 A"/>
    <property type="chains" value="2A/2B/2C/2D/2E/2F/2G/2H/2I/4A/4B/4C/4D/4E/4F/4G/4H/4I=1-437"/>
</dbReference>
<dbReference type="PDBsum" id="7MIZ"/>
<dbReference type="PDBsum" id="7TNQ"/>
<dbReference type="PDBsum" id="7TNS"/>
<dbReference type="PDBsum" id="7TNT"/>
<dbReference type="EMDB" id="EMD-23869"/>
<dbReference type="EMDB" id="EMD-26018"/>
<dbReference type="EMDB" id="EMD-26019"/>
<dbReference type="EMDB" id="EMD-26020"/>
<dbReference type="SMR" id="P10873"/>
<dbReference type="EnsemblProtists" id="TGME49_316400-t26_1">
    <property type="protein sequence ID" value="TGME49_316400-t26_1"/>
    <property type="gene ID" value="TGME49_316400"/>
</dbReference>
<dbReference type="VEuPathDB" id="ToxoDB:TGARI_316400"/>
<dbReference type="VEuPathDB" id="ToxoDB:TGCAST_316400"/>
<dbReference type="VEuPathDB" id="ToxoDB:TGCOUG_316400"/>
<dbReference type="VEuPathDB" id="ToxoDB:TGDOM2_316400"/>
<dbReference type="VEuPathDB" id="ToxoDB:TGFOU_316400"/>
<dbReference type="VEuPathDB" id="ToxoDB:TGGT1_316400B"/>
<dbReference type="VEuPathDB" id="ToxoDB:TGMAS_316400"/>
<dbReference type="VEuPathDB" id="ToxoDB:TGME49_316400"/>
<dbReference type="VEuPathDB" id="ToxoDB:TGP89_316400"/>
<dbReference type="VEuPathDB" id="ToxoDB:TGPRC2_316400"/>
<dbReference type="VEuPathDB" id="ToxoDB:TGRH88_055140"/>
<dbReference type="VEuPathDB" id="ToxoDB:TGRUB_316400"/>
<dbReference type="VEuPathDB" id="ToxoDB:TGVAND_316400"/>
<dbReference type="VEuPathDB" id="ToxoDB:TGVEG_316400"/>
<dbReference type="OMA" id="YMASCIL"/>
<dbReference type="GO" id="GO:0005737">
    <property type="term" value="C:cytoplasm"/>
    <property type="evidence" value="ECO:0007669"/>
    <property type="project" value="UniProtKB-KW"/>
</dbReference>
<dbReference type="GO" id="GO:0005874">
    <property type="term" value="C:microtubule"/>
    <property type="evidence" value="ECO:0007669"/>
    <property type="project" value="UniProtKB-KW"/>
</dbReference>
<dbReference type="GO" id="GO:0005525">
    <property type="term" value="F:GTP binding"/>
    <property type="evidence" value="ECO:0007669"/>
    <property type="project" value="UniProtKB-KW"/>
</dbReference>
<dbReference type="GO" id="GO:0016787">
    <property type="term" value="F:hydrolase activity"/>
    <property type="evidence" value="ECO:0007669"/>
    <property type="project" value="UniProtKB-KW"/>
</dbReference>
<dbReference type="GO" id="GO:0046872">
    <property type="term" value="F:metal ion binding"/>
    <property type="evidence" value="ECO:0007669"/>
    <property type="project" value="UniProtKB-KW"/>
</dbReference>
<dbReference type="GO" id="GO:0005200">
    <property type="term" value="F:structural constituent of cytoskeleton"/>
    <property type="evidence" value="ECO:0007669"/>
    <property type="project" value="InterPro"/>
</dbReference>
<dbReference type="GO" id="GO:0007017">
    <property type="term" value="P:microtubule-based process"/>
    <property type="evidence" value="ECO:0007669"/>
    <property type="project" value="InterPro"/>
</dbReference>
<dbReference type="CDD" id="cd02186">
    <property type="entry name" value="alpha_tubulin"/>
    <property type="match status" value="1"/>
</dbReference>
<dbReference type="FunFam" id="1.10.287.600:FF:000005">
    <property type="entry name" value="Tubulin alpha chain"/>
    <property type="match status" value="1"/>
</dbReference>
<dbReference type="FunFam" id="3.30.1330.20:FF:000001">
    <property type="entry name" value="Tubulin alpha chain"/>
    <property type="match status" value="1"/>
</dbReference>
<dbReference type="FunFam" id="3.40.50.1440:FF:000004">
    <property type="entry name" value="Tubulin alpha chain"/>
    <property type="match status" value="1"/>
</dbReference>
<dbReference type="Gene3D" id="1.10.287.600">
    <property type="entry name" value="Helix hairpin bin"/>
    <property type="match status" value="1"/>
</dbReference>
<dbReference type="Gene3D" id="3.30.1330.20">
    <property type="entry name" value="Tubulin/FtsZ, C-terminal domain"/>
    <property type="match status" value="1"/>
</dbReference>
<dbReference type="Gene3D" id="3.40.50.1440">
    <property type="entry name" value="Tubulin/FtsZ, GTPase domain"/>
    <property type="match status" value="1"/>
</dbReference>
<dbReference type="InterPro" id="IPR002452">
    <property type="entry name" value="Alpha_tubulin"/>
</dbReference>
<dbReference type="InterPro" id="IPR008280">
    <property type="entry name" value="Tub_FtsZ_C"/>
</dbReference>
<dbReference type="InterPro" id="IPR000217">
    <property type="entry name" value="Tubulin"/>
</dbReference>
<dbReference type="InterPro" id="IPR037103">
    <property type="entry name" value="Tubulin/FtsZ-like_C"/>
</dbReference>
<dbReference type="InterPro" id="IPR018316">
    <property type="entry name" value="Tubulin/FtsZ_2-layer-sand-dom"/>
</dbReference>
<dbReference type="InterPro" id="IPR036525">
    <property type="entry name" value="Tubulin/FtsZ_GTPase_sf"/>
</dbReference>
<dbReference type="InterPro" id="IPR023123">
    <property type="entry name" value="Tubulin_C"/>
</dbReference>
<dbReference type="InterPro" id="IPR017975">
    <property type="entry name" value="Tubulin_CS"/>
</dbReference>
<dbReference type="InterPro" id="IPR003008">
    <property type="entry name" value="Tubulin_FtsZ_GTPase"/>
</dbReference>
<dbReference type="PANTHER" id="PTHR11588">
    <property type="entry name" value="TUBULIN"/>
    <property type="match status" value="1"/>
</dbReference>
<dbReference type="Pfam" id="PF00091">
    <property type="entry name" value="Tubulin"/>
    <property type="match status" value="1"/>
</dbReference>
<dbReference type="Pfam" id="PF03953">
    <property type="entry name" value="Tubulin_C"/>
    <property type="match status" value="1"/>
</dbReference>
<dbReference type="PRINTS" id="PR01162">
    <property type="entry name" value="ALPHATUBULIN"/>
</dbReference>
<dbReference type="PRINTS" id="PR01161">
    <property type="entry name" value="TUBULIN"/>
</dbReference>
<dbReference type="SMART" id="SM00864">
    <property type="entry name" value="Tubulin"/>
    <property type="match status" value="1"/>
</dbReference>
<dbReference type="SMART" id="SM00865">
    <property type="entry name" value="Tubulin_C"/>
    <property type="match status" value="1"/>
</dbReference>
<dbReference type="SUPFAM" id="SSF55307">
    <property type="entry name" value="Tubulin C-terminal domain-like"/>
    <property type="match status" value="1"/>
</dbReference>
<dbReference type="SUPFAM" id="SSF52490">
    <property type="entry name" value="Tubulin nucleotide-binding domain-like"/>
    <property type="match status" value="1"/>
</dbReference>
<dbReference type="PROSITE" id="PS00227">
    <property type="entry name" value="TUBULIN"/>
    <property type="match status" value="1"/>
</dbReference>
<proteinExistence type="evidence at protein level"/>
<feature type="chain" id="PRO_0000048233" description="Tubulin alpha chain">
    <location>
        <begin position="1"/>
        <end position="453"/>
    </location>
</feature>
<feature type="active site" evidence="2">
    <location>
        <position position="254"/>
    </location>
</feature>
<feature type="binding site" evidence="2">
    <location>
        <position position="11"/>
    </location>
    <ligand>
        <name>GTP</name>
        <dbReference type="ChEBI" id="CHEBI:37565"/>
    </ligand>
</feature>
<feature type="binding site" evidence="2">
    <location>
        <position position="71"/>
    </location>
    <ligand>
        <name>GTP</name>
        <dbReference type="ChEBI" id="CHEBI:37565"/>
    </ligand>
</feature>
<feature type="binding site" evidence="2">
    <location>
        <position position="71"/>
    </location>
    <ligand>
        <name>Mg(2+)</name>
        <dbReference type="ChEBI" id="CHEBI:18420"/>
    </ligand>
</feature>
<feature type="binding site" evidence="2">
    <location>
        <position position="144"/>
    </location>
    <ligand>
        <name>GTP</name>
        <dbReference type="ChEBI" id="CHEBI:37565"/>
    </ligand>
</feature>
<feature type="binding site" evidence="2">
    <location>
        <position position="145"/>
    </location>
    <ligand>
        <name>GTP</name>
        <dbReference type="ChEBI" id="CHEBI:37565"/>
    </ligand>
</feature>
<feature type="binding site" evidence="2">
    <location>
        <position position="179"/>
    </location>
    <ligand>
        <name>GTP</name>
        <dbReference type="ChEBI" id="CHEBI:37565"/>
    </ligand>
</feature>
<feature type="binding site" evidence="2">
    <location>
        <position position="206"/>
    </location>
    <ligand>
        <name>GTP</name>
        <dbReference type="ChEBI" id="CHEBI:37565"/>
    </ligand>
</feature>
<feature type="binding site" evidence="2">
    <location>
        <position position="228"/>
    </location>
    <ligand>
        <name>GTP</name>
        <dbReference type="ChEBI" id="CHEBI:37565"/>
    </ligand>
</feature>
<feature type="site" description="Involved in polymerization">
    <location>
        <position position="453"/>
    </location>
</feature>
<feature type="modified residue" description="N6-acetyllysine" evidence="1">
    <location>
        <position position="40"/>
    </location>
</feature>
<keyword id="KW-0002">3D-structure</keyword>
<keyword id="KW-0007">Acetylation</keyword>
<keyword id="KW-0963">Cytoplasm</keyword>
<keyword id="KW-0206">Cytoskeleton</keyword>
<keyword id="KW-0342">GTP-binding</keyword>
<keyword id="KW-0378">Hydrolase</keyword>
<keyword id="KW-0460">Magnesium</keyword>
<keyword id="KW-0479">Metal-binding</keyword>
<keyword id="KW-0493">Microtubule</keyword>
<keyword id="KW-0547">Nucleotide-binding</keyword>
<organism>
    <name type="scientific">Toxoplasma gondii</name>
    <dbReference type="NCBI Taxonomy" id="5811"/>
    <lineage>
        <taxon>Eukaryota</taxon>
        <taxon>Sar</taxon>
        <taxon>Alveolata</taxon>
        <taxon>Apicomplexa</taxon>
        <taxon>Conoidasida</taxon>
        <taxon>Coccidia</taxon>
        <taxon>Eucoccidiorida</taxon>
        <taxon>Eimeriorina</taxon>
        <taxon>Sarcocystidae</taxon>
        <taxon>Toxoplasma</taxon>
    </lineage>
</organism>
<protein>
    <recommendedName>
        <fullName>Tubulin alpha chain</fullName>
        <ecNumber evidence="2">3.6.5.-</ecNumber>
    </recommendedName>
    <alternativeName>
        <fullName>Alpha-tubulin</fullName>
    </alternativeName>
</protein>